<keyword id="KW-0067">ATP-binding</keyword>
<keyword id="KW-0997">Cell inner membrane</keyword>
<keyword id="KW-1003">Cell membrane</keyword>
<keyword id="KW-0472">Membrane</keyword>
<keyword id="KW-0547">Nucleotide-binding</keyword>
<keyword id="KW-0592">Phosphate transport</keyword>
<keyword id="KW-1185">Reference proteome</keyword>
<keyword id="KW-1278">Translocase</keyword>
<keyword id="KW-0813">Transport</keyword>
<protein>
    <recommendedName>
        <fullName evidence="1">Phosphate import ATP-binding protein PstB</fullName>
        <ecNumber evidence="1">7.3.2.1</ecNumber>
    </recommendedName>
    <alternativeName>
        <fullName evidence="1">ABC phosphate transporter</fullName>
    </alternativeName>
    <alternativeName>
        <fullName evidence="1">Phosphate-transporting ATPase</fullName>
    </alternativeName>
</protein>
<dbReference type="EC" id="7.3.2.1" evidence="1"/>
<dbReference type="EMBL" id="CP000115">
    <property type="protein sequence ID" value="ABA03776.1"/>
    <property type="molecule type" value="Genomic_DNA"/>
</dbReference>
<dbReference type="RefSeq" id="WP_011313837.1">
    <property type="nucleotide sequence ID" value="NC_007406.1"/>
</dbReference>
<dbReference type="SMR" id="Q3SVB5"/>
<dbReference type="STRING" id="323098.Nwi_0509"/>
<dbReference type="KEGG" id="nwi:Nwi_0509"/>
<dbReference type="eggNOG" id="COG1117">
    <property type="taxonomic scope" value="Bacteria"/>
</dbReference>
<dbReference type="HOGENOM" id="CLU_000604_1_22_5"/>
<dbReference type="OrthoDB" id="9802264at2"/>
<dbReference type="Proteomes" id="UP000002531">
    <property type="component" value="Chromosome"/>
</dbReference>
<dbReference type="GO" id="GO:0005886">
    <property type="term" value="C:plasma membrane"/>
    <property type="evidence" value="ECO:0007669"/>
    <property type="project" value="UniProtKB-SubCell"/>
</dbReference>
<dbReference type="GO" id="GO:0005524">
    <property type="term" value="F:ATP binding"/>
    <property type="evidence" value="ECO:0007669"/>
    <property type="project" value="UniProtKB-KW"/>
</dbReference>
<dbReference type="GO" id="GO:0016887">
    <property type="term" value="F:ATP hydrolysis activity"/>
    <property type="evidence" value="ECO:0007669"/>
    <property type="project" value="InterPro"/>
</dbReference>
<dbReference type="GO" id="GO:0015415">
    <property type="term" value="F:ATPase-coupled phosphate ion transmembrane transporter activity"/>
    <property type="evidence" value="ECO:0007669"/>
    <property type="project" value="UniProtKB-EC"/>
</dbReference>
<dbReference type="GO" id="GO:0035435">
    <property type="term" value="P:phosphate ion transmembrane transport"/>
    <property type="evidence" value="ECO:0007669"/>
    <property type="project" value="InterPro"/>
</dbReference>
<dbReference type="CDD" id="cd03260">
    <property type="entry name" value="ABC_PstB_phosphate_transporter"/>
    <property type="match status" value="1"/>
</dbReference>
<dbReference type="FunFam" id="3.40.50.300:FF:000132">
    <property type="entry name" value="Phosphate import ATP-binding protein PstB"/>
    <property type="match status" value="1"/>
</dbReference>
<dbReference type="Gene3D" id="3.40.50.300">
    <property type="entry name" value="P-loop containing nucleotide triphosphate hydrolases"/>
    <property type="match status" value="1"/>
</dbReference>
<dbReference type="InterPro" id="IPR003593">
    <property type="entry name" value="AAA+_ATPase"/>
</dbReference>
<dbReference type="InterPro" id="IPR003439">
    <property type="entry name" value="ABC_transporter-like_ATP-bd"/>
</dbReference>
<dbReference type="InterPro" id="IPR017871">
    <property type="entry name" value="ABC_transporter-like_CS"/>
</dbReference>
<dbReference type="InterPro" id="IPR027417">
    <property type="entry name" value="P-loop_NTPase"/>
</dbReference>
<dbReference type="InterPro" id="IPR005670">
    <property type="entry name" value="PstB-like"/>
</dbReference>
<dbReference type="NCBIfam" id="TIGR00972">
    <property type="entry name" value="3a0107s01c2"/>
    <property type="match status" value="1"/>
</dbReference>
<dbReference type="PANTHER" id="PTHR43423">
    <property type="entry name" value="ABC TRANSPORTER I FAMILY MEMBER 17"/>
    <property type="match status" value="1"/>
</dbReference>
<dbReference type="PANTHER" id="PTHR43423:SF3">
    <property type="entry name" value="PHOSPHATE IMPORT ATP-BINDING PROTEIN PSTB"/>
    <property type="match status" value="1"/>
</dbReference>
<dbReference type="Pfam" id="PF00005">
    <property type="entry name" value="ABC_tran"/>
    <property type="match status" value="1"/>
</dbReference>
<dbReference type="SMART" id="SM00382">
    <property type="entry name" value="AAA"/>
    <property type="match status" value="1"/>
</dbReference>
<dbReference type="SUPFAM" id="SSF52540">
    <property type="entry name" value="P-loop containing nucleoside triphosphate hydrolases"/>
    <property type="match status" value="1"/>
</dbReference>
<dbReference type="PROSITE" id="PS00211">
    <property type="entry name" value="ABC_TRANSPORTER_1"/>
    <property type="match status" value="1"/>
</dbReference>
<dbReference type="PROSITE" id="PS50893">
    <property type="entry name" value="ABC_TRANSPORTER_2"/>
    <property type="match status" value="1"/>
</dbReference>
<dbReference type="PROSITE" id="PS51238">
    <property type="entry name" value="PSTB"/>
    <property type="match status" value="1"/>
</dbReference>
<evidence type="ECO:0000255" key="1">
    <source>
        <dbReference type="HAMAP-Rule" id="MF_01702"/>
    </source>
</evidence>
<evidence type="ECO:0000256" key="2">
    <source>
        <dbReference type="SAM" id="MobiDB-lite"/>
    </source>
</evidence>
<accession>Q3SVB5</accession>
<gene>
    <name evidence="1" type="primary">pstB</name>
    <name type="ordered locus">Nwi_0509</name>
</gene>
<reference key="1">
    <citation type="journal article" date="2006" name="Appl. Environ. Microbiol.">
        <title>Genome sequence of the chemolithoautotrophic nitrite-oxidizing bacterium Nitrobacter winogradskyi Nb-255.</title>
        <authorList>
            <person name="Starkenburg S.R."/>
            <person name="Chain P.S.G."/>
            <person name="Sayavedra-Soto L.A."/>
            <person name="Hauser L."/>
            <person name="Land M.L."/>
            <person name="Larimer F.W."/>
            <person name="Malfatti S.A."/>
            <person name="Klotz M.G."/>
            <person name="Bottomley P.J."/>
            <person name="Arp D.J."/>
            <person name="Hickey W.J."/>
        </authorList>
    </citation>
    <scope>NUCLEOTIDE SEQUENCE [LARGE SCALE GENOMIC DNA]</scope>
    <source>
        <strain>ATCC 25391 / DSM 10237 / CIP 104748 / NCIMB 11846 / Nb-255</strain>
    </source>
</reference>
<organism>
    <name type="scientific">Nitrobacter winogradskyi (strain ATCC 25391 / DSM 10237 / CIP 104748 / NCIMB 11846 / Nb-255)</name>
    <dbReference type="NCBI Taxonomy" id="323098"/>
    <lineage>
        <taxon>Bacteria</taxon>
        <taxon>Pseudomonadati</taxon>
        <taxon>Pseudomonadota</taxon>
        <taxon>Alphaproteobacteria</taxon>
        <taxon>Hyphomicrobiales</taxon>
        <taxon>Nitrobacteraceae</taxon>
        <taxon>Nitrobacter</taxon>
    </lineage>
</organism>
<feature type="chain" id="PRO_0000272483" description="Phosphate import ATP-binding protein PstB">
    <location>
        <begin position="1"/>
        <end position="273"/>
    </location>
</feature>
<feature type="domain" description="ABC transporter" evidence="1">
    <location>
        <begin position="27"/>
        <end position="268"/>
    </location>
</feature>
<feature type="region of interest" description="Disordered" evidence="2">
    <location>
        <begin position="1"/>
        <end position="20"/>
    </location>
</feature>
<feature type="binding site" evidence="1">
    <location>
        <begin position="59"/>
        <end position="66"/>
    </location>
    <ligand>
        <name>ATP</name>
        <dbReference type="ChEBI" id="CHEBI:30616"/>
    </ligand>
</feature>
<proteinExistence type="inferred from homology"/>
<sequence>MTTVSTAAASGPAVPPPRIDPDVPAKVAARNLNFYYGQHHALKNINLSIAANRVTAFIGPSGCGKSTLLRIFNRMYDLYPGQRVEGRVLLDDTDILDPKLDLNLLRARVGMVFQKPTPFPMTIYENIAFGIRLYEKLPKSEMDSRVEKALRDGALWTEVKDKLNASGLSLSGGQQQRLCIARTVAVRPEVILFDEPCSALDPISTAKVEELIDELKTHYTIAIVTHNMQQAARVSDYTSFMYLGEMIEFGPTDKLFTSPSDRRTQDYITGRFG</sequence>
<comment type="function">
    <text evidence="1">Part of the ABC transporter complex PstSACB involved in phosphate import. Responsible for energy coupling to the transport system.</text>
</comment>
<comment type="catalytic activity">
    <reaction evidence="1">
        <text>phosphate(out) + ATP + H2O = ADP + 2 phosphate(in) + H(+)</text>
        <dbReference type="Rhea" id="RHEA:24440"/>
        <dbReference type="ChEBI" id="CHEBI:15377"/>
        <dbReference type="ChEBI" id="CHEBI:15378"/>
        <dbReference type="ChEBI" id="CHEBI:30616"/>
        <dbReference type="ChEBI" id="CHEBI:43474"/>
        <dbReference type="ChEBI" id="CHEBI:456216"/>
        <dbReference type="EC" id="7.3.2.1"/>
    </reaction>
</comment>
<comment type="subunit">
    <text evidence="1">The complex is composed of two ATP-binding proteins (PstB), two transmembrane proteins (PstC and PstA) and a solute-binding protein (PstS).</text>
</comment>
<comment type="subcellular location">
    <subcellularLocation>
        <location evidence="1">Cell inner membrane</location>
        <topology evidence="1">Peripheral membrane protein</topology>
    </subcellularLocation>
</comment>
<comment type="similarity">
    <text evidence="1">Belongs to the ABC transporter superfamily. Phosphate importer (TC 3.A.1.7) family.</text>
</comment>
<name>PSTB_NITWN</name>